<organism>
    <name type="scientific">Vibrio cholerae serotype O1 (strain M66-2)</name>
    <dbReference type="NCBI Taxonomy" id="579112"/>
    <lineage>
        <taxon>Bacteria</taxon>
        <taxon>Pseudomonadati</taxon>
        <taxon>Pseudomonadota</taxon>
        <taxon>Gammaproteobacteria</taxon>
        <taxon>Vibrionales</taxon>
        <taxon>Vibrionaceae</taxon>
        <taxon>Vibrio</taxon>
    </lineage>
</organism>
<sequence length="78" mass="8986">MSRVCQVTGKRPAVGNNRSHAKNATKRRFLPNLQTHRFWVESEKRFVKLRLTAKGMRIIDKKGIDAVLVEIRARGENV</sequence>
<accession>C3LQI0</accession>
<gene>
    <name evidence="1" type="primary">rpmB</name>
    <name type="ordered locus">VCM66_0206</name>
</gene>
<proteinExistence type="inferred from homology"/>
<reference key="1">
    <citation type="journal article" date="2008" name="PLoS ONE">
        <title>A recalibrated molecular clock and independent origins for the cholera pandemic clones.</title>
        <authorList>
            <person name="Feng L."/>
            <person name="Reeves P.R."/>
            <person name="Lan R."/>
            <person name="Ren Y."/>
            <person name="Gao C."/>
            <person name="Zhou Z."/>
            <person name="Ren Y."/>
            <person name="Cheng J."/>
            <person name="Wang W."/>
            <person name="Wang J."/>
            <person name="Qian W."/>
            <person name="Li D."/>
            <person name="Wang L."/>
        </authorList>
    </citation>
    <scope>NUCLEOTIDE SEQUENCE [LARGE SCALE GENOMIC DNA]</scope>
    <source>
        <strain>M66-2</strain>
    </source>
</reference>
<comment type="similarity">
    <text evidence="1">Belongs to the bacterial ribosomal protein bL28 family.</text>
</comment>
<dbReference type="EMBL" id="CP001233">
    <property type="protein sequence ID" value="ACP04538.1"/>
    <property type="molecule type" value="Genomic_DNA"/>
</dbReference>
<dbReference type="RefSeq" id="WP_000091952.1">
    <property type="nucleotide sequence ID" value="NC_012578.1"/>
</dbReference>
<dbReference type="SMR" id="C3LQI0"/>
<dbReference type="GeneID" id="94014999"/>
<dbReference type="KEGG" id="vcm:VCM66_0206"/>
<dbReference type="HOGENOM" id="CLU_064548_3_1_6"/>
<dbReference type="Proteomes" id="UP000001217">
    <property type="component" value="Chromosome I"/>
</dbReference>
<dbReference type="GO" id="GO:0022625">
    <property type="term" value="C:cytosolic large ribosomal subunit"/>
    <property type="evidence" value="ECO:0007669"/>
    <property type="project" value="TreeGrafter"/>
</dbReference>
<dbReference type="GO" id="GO:0003735">
    <property type="term" value="F:structural constituent of ribosome"/>
    <property type="evidence" value="ECO:0007669"/>
    <property type="project" value="InterPro"/>
</dbReference>
<dbReference type="GO" id="GO:0006412">
    <property type="term" value="P:translation"/>
    <property type="evidence" value="ECO:0007669"/>
    <property type="project" value="UniProtKB-UniRule"/>
</dbReference>
<dbReference type="FunFam" id="2.30.170.40:FF:000001">
    <property type="entry name" value="50S ribosomal protein L28"/>
    <property type="match status" value="1"/>
</dbReference>
<dbReference type="Gene3D" id="2.30.170.40">
    <property type="entry name" value="Ribosomal protein L28/L24"/>
    <property type="match status" value="1"/>
</dbReference>
<dbReference type="HAMAP" id="MF_00373">
    <property type="entry name" value="Ribosomal_bL28"/>
    <property type="match status" value="1"/>
</dbReference>
<dbReference type="InterPro" id="IPR026569">
    <property type="entry name" value="Ribosomal_bL28"/>
</dbReference>
<dbReference type="InterPro" id="IPR034704">
    <property type="entry name" value="Ribosomal_bL28/bL31-like_sf"/>
</dbReference>
<dbReference type="InterPro" id="IPR001383">
    <property type="entry name" value="Ribosomal_bL28_bact-type"/>
</dbReference>
<dbReference type="InterPro" id="IPR037147">
    <property type="entry name" value="Ribosomal_bL28_sf"/>
</dbReference>
<dbReference type="NCBIfam" id="TIGR00009">
    <property type="entry name" value="L28"/>
    <property type="match status" value="1"/>
</dbReference>
<dbReference type="PANTHER" id="PTHR13528">
    <property type="entry name" value="39S RIBOSOMAL PROTEIN L28, MITOCHONDRIAL"/>
    <property type="match status" value="1"/>
</dbReference>
<dbReference type="PANTHER" id="PTHR13528:SF2">
    <property type="entry name" value="LARGE RIBOSOMAL SUBUNIT PROTEIN BL28M"/>
    <property type="match status" value="1"/>
</dbReference>
<dbReference type="Pfam" id="PF00830">
    <property type="entry name" value="Ribosomal_L28"/>
    <property type="match status" value="1"/>
</dbReference>
<dbReference type="SUPFAM" id="SSF143800">
    <property type="entry name" value="L28p-like"/>
    <property type="match status" value="1"/>
</dbReference>
<evidence type="ECO:0000255" key="1">
    <source>
        <dbReference type="HAMAP-Rule" id="MF_00373"/>
    </source>
</evidence>
<evidence type="ECO:0000256" key="2">
    <source>
        <dbReference type="SAM" id="MobiDB-lite"/>
    </source>
</evidence>
<evidence type="ECO:0000305" key="3"/>
<protein>
    <recommendedName>
        <fullName evidence="1">Large ribosomal subunit protein bL28</fullName>
    </recommendedName>
    <alternativeName>
        <fullName evidence="3">50S ribosomal protein L28</fullName>
    </alternativeName>
</protein>
<name>RL28_VIBCM</name>
<keyword id="KW-0687">Ribonucleoprotein</keyword>
<keyword id="KW-0689">Ribosomal protein</keyword>
<feature type="chain" id="PRO_1000195949" description="Large ribosomal subunit protein bL28">
    <location>
        <begin position="1"/>
        <end position="78"/>
    </location>
</feature>
<feature type="region of interest" description="Disordered" evidence="2">
    <location>
        <begin position="1"/>
        <end position="25"/>
    </location>
</feature>